<accession>Q9CFG0</accession>
<evidence type="ECO:0000255" key="1">
    <source>
        <dbReference type="HAMAP-Rule" id="MF_00139"/>
    </source>
</evidence>
<evidence type="ECO:0000255" key="2">
    <source>
        <dbReference type="PROSITE-ProRule" id="PRU01202"/>
    </source>
</evidence>
<evidence type="ECO:0000305" key="3"/>
<comment type="catalytic activity">
    <reaction evidence="1">
        <text>(6R)-10-formyltetrahydrofolate + 5-amino-1-(5-phospho-beta-D-ribosyl)imidazole-4-carboxamide = 5-formamido-1-(5-phospho-D-ribosyl)imidazole-4-carboxamide + (6S)-5,6,7,8-tetrahydrofolate</text>
        <dbReference type="Rhea" id="RHEA:22192"/>
        <dbReference type="ChEBI" id="CHEBI:57453"/>
        <dbReference type="ChEBI" id="CHEBI:58467"/>
        <dbReference type="ChEBI" id="CHEBI:58475"/>
        <dbReference type="ChEBI" id="CHEBI:195366"/>
        <dbReference type="EC" id="2.1.2.3"/>
    </reaction>
</comment>
<comment type="catalytic activity">
    <reaction evidence="1">
        <text>IMP + H2O = 5-formamido-1-(5-phospho-D-ribosyl)imidazole-4-carboxamide</text>
        <dbReference type="Rhea" id="RHEA:18445"/>
        <dbReference type="ChEBI" id="CHEBI:15377"/>
        <dbReference type="ChEBI" id="CHEBI:58053"/>
        <dbReference type="ChEBI" id="CHEBI:58467"/>
        <dbReference type="EC" id="3.5.4.10"/>
    </reaction>
</comment>
<comment type="pathway">
    <text evidence="1">Purine metabolism; IMP biosynthesis via de novo pathway; 5-formamido-1-(5-phospho-D-ribosyl)imidazole-4-carboxamide from 5-amino-1-(5-phospho-D-ribosyl)imidazole-4-carboxamide (10-formyl THF route): step 1/1.</text>
</comment>
<comment type="pathway">
    <text evidence="1">Purine metabolism; IMP biosynthesis via de novo pathway; IMP from 5-formamido-1-(5-phospho-D-ribosyl)imidazole-4-carboxamide: step 1/1.</text>
</comment>
<comment type="domain">
    <text evidence="1">The IMP cyclohydrolase activity resides in the N-terminal region.</text>
</comment>
<comment type="similarity">
    <text evidence="1 3">Belongs to the PurH family.</text>
</comment>
<proteinExistence type="inferred from homology"/>
<gene>
    <name evidence="1" type="primary">purH</name>
    <name type="ordered locus">LL1518</name>
    <name type="ORF">L158710</name>
</gene>
<sequence>MSKRALISVSDKEGIVEFAKEIRELGWEIISTGGTKAVLDQEEIPNIAIDEVTGFPEMMDGRLKTLHPLIHGALLGRRDLESHMKSMTEHHISPIDLVVVNLYPFKETLLAGGSQAEMIEKIDIGGPSMLRSAAKNHASVTVVCDPNDYEKVLTELSVKGETSLSFRQQLAAKVFRHTASYDALIAQYLTEEFPVENVKPEKLTLTYDLKQGMRYGENPQQNADFYESGIPTTYSIAQSKQIHGKELSYNNVRDADAALQIARDFEEPTVVALKHMNPCGIGTATDIEKAWDYAYEADPVSIFGGIIVLNREVTLATAQKMSKIFLEIIIAPSYSKEALEVLSKKKNIRLLTVDFSKKEASEKEALVTGVLGGLLVQNQDVIVENPKEWTVATKVQPTDRQMEAMKFAWKAVKFVKSNGIIVTNDHQTLGVGPGQTNRVGSVKIALEATADKSVELQENAVLGSDAFFPFADNIDEIAKAGIKAIVQPGGSVRDQEVIDACDKYGIAMVFTGLRHFRH</sequence>
<organism>
    <name type="scientific">Lactococcus lactis subsp. lactis (strain IL1403)</name>
    <name type="common">Streptococcus lactis</name>
    <dbReference type="NCBI Taxonomy" id="272623"/>
    <lineage>
        <taxon>Bacteria</taxon>
        <taxon>Bacillati</taxon>
        <taxon>Bacillota</taxon>
        <taxon>Bacilli</taxon>
        <taxon>Lactobacillales</taxon>
        <taxon>Streptococcaceae</taxon>
        <taxon>Lactococcus</taxon>
    </lineage>
</organism>
<feature type="chain" id="PRO_0000192096" description="Bifunctional purine biosynthesis protein PurH">
    <location>
        <begin position="1"/>
        <end position="518"/>
    </location>
</feature>
<feature type="domain" description="MGS-like" evidence="2">
    <location>
        <begin position="1"/>
        <end position="144"/>
    </location>
</feature>
<reference key="1">
    <citation type="journal article" date="2001" name="Genome Res.">
        <title>The complete genome sequence of the lactic acid bacterium Lactococcus lactis ssp. lactis IL1403.</title>
        <authorList>
            <person name="Bolotin A."/>
            <person name="Wincker P."/>
            <person name="Mauger S."/>
            <person name="Jaillon O."/>
            <person name="Malarme K."/>
            <person name="Weissenbach J."/>
            <person name="Ehrlich S.D."/>
            <person name="Sorokin A."/>
        </authorList>
    </citation>
    <scope>NUCLEOTIDE SEQUENCE [LARGE SCALE GENOMIC DNA]</scope>
    <source>
        <strain>IL1403</strain>
    </source>
</reference>
<protein>
    <recommendedName>
        <fullName evidence="1">Bifunctional purine biosynthesis protein PurH</fullName>
    </recommendedName>
    <domain>
        <recommendedName>
            <fullName evidence="1">Phosphoribosylaminoimidazolecarboxamide formyltransferase</fullName>
            <ecNumber evidence="1">2.1.2.3</ecNumber>
        </recommendedName>
        <alternativeName>
            <fullName evidence="1">AICAR transformylase</fullName>
        </alternativeName>
    </domain>
    <domain>
        <recommendedName>
            <fullName evidence="1">IMP cyclohydrolase</fullName>
            <ecNumber evidence="1">3.5.4.10</ecNumber>
        </recommendedName>
        <alternativeName>
            <fullName evidence="1">ATIC</fullName>
        </alternativeName>
        <alternativeName>
            <fullName evidence="1">IMP synthase</fullName>
        </alternativeName>
        <alternativeName>
            <fullName evidence="1">Inosinicase</fullName>
        </alternativeName>
    </domain>
</protein>
<name>PUR9_LACLA</name>
<dbReference type="EC" id="2.1.2.3" evidence="1"/>
<dbReference type="EC" id="3.5.4.10" evidence="1"/>
<dbReference type="EMBL" id="AE005176">
    <property type="protein sequence ID" value="AAK05616.1"/>
    <property type="molecule type" value="Genomic_DNA"/>
</dbReference>
<dbReference type="PIR" id="F86814">
    <property type="entry name" value="F86814"/>
</dbReference>
<dbReference type="RefSeq" id="NP_267674.1">
    <property type="nucleotide sequence ID" value="NC_002662.1"/>
</dbReference>
<dbReference type="RefSeq" id="WP_003130058.1">
    <property type="nucleotide sequence ID" value="NC_002662.1"/>
</dbReference>
<dbReference type="SMR" id="Q9CFG0"/>
<dbReference type="PaxDb" id="272623-L158710"/>
<dbReference type="EnsemblBacteria" id="AAK05616">
    <property type="protein sequence ID" value="AAK05616"/>
    <property type="gene ID" value="L158710"/>
</dbReference>
<dbReference type="KEGG" id="lla:L158710"/>
<dbReference type="PATRIC" id="fig|272623.7.peg.1628"/>
<dbReference type="eggNOG" id="COG0138">
    <property type="taxonomic scope" value="Bacteria"/>
</dbReference>
<dbReference type="HOGENOM" id="CLU_016316_5_2_9"/>
<dbReference type="OrthoDB" id="9802065at2"/>
<dbReference type="UniPathway" id="UPA00074">
    <property type="reaction ID" value="UER00133"/>
</dbReference>
<dbReference type="UniPathway" id="UPA00074">
    <property type="reaction ID" value="UER00135"/>
</dbReference>
<dbReference type="Proteomes" id="UP000002196">
    <property type="component" value="Chromosome"/>
</dbReference>
<dbReference type="GO" id="GO:0005829">
    <property type="term" value="C:cytosol"/>
    <property type="evidence" value="ECO:0007669"/>
    <property type="project" value="TreeGrafter"/>
</dbReference>
<dbReference type="GO" id="GO:0003937">
    <property type="term" value="F:IMP cyclohydrolase activity"/>
    <property type="evidence" value="ECO:0007669"/>
    <property type="project" value="UniProtKB-UniRule"/>
</dbReference>
<dbReference type="GO" id="GO:0004643">
    <property type="term" value="F:phosphoribosylaminoimidazolecarboxamide formyltransferase activity"/>
    <property type="evidence" value="ECO:0007669"/>
    <property type="project" value="UniProtKB-UniRule"/>
</dbReference>
<dbReference type="GO" id="GO:0006189">
    <property type="term" value="P:'de novo' IMP biosynthetic process"/>
    <property type="evidence" value="ECO:0007669"/>
    <property type="project" value="UniProtKB-UniRule"/>
</dbReference>
<dbReference type="CDD" id="cd01421">
    <property type="entry name" value="IMPCH"/>
    <property type="match status" value="1"/>
</dbReference>
<dbReference type="FunFam" id="3.40.140.20:FF:000001">
    <property type="entry name" value="Bifunctional purine biosynthesis protein PurH"/>
    <property type="match status" value="1"/>
</dbReference>
<dbReference type="FunFam" id="3.40.140.20:FF:000002">
    <property type="entry name" value="Bifunctional purine biosynthesis protein PurH"/>
    <property type="match status" value="1"/>
</dbReference>
<dbReference type="FunFam" id="3.40.50.1380:FF:000001">
    <property type="entry name" value="Bifunctional purine biosynthesis protein PurH"/>
    <property type="match status" value="1"/>
</dbReference>
<dbReference type="Gene3D" id="3.40.140.20">
    <property type="match status" value="2"/>
</dbReference>
<dbReference type="Gene3D" id="3.40.50.1380">
    <property type="entry name" value="Methylglyoxal synthase-like domain"/>
    <property type="match status" value="1"/>
</dbReference>
<dbReference type="HAMAP" id="MF_00139">
    <property type="entry name" value="PurH"/>
    <property type="match status" value="1"/>
</dbReference>
<dbReference type="InterPro" id="IPR024051">
    <property type="entry name" value="AICAR_Tfase_dup_dom_sf"/>
</dbReference>
<dbReference type="InterPro" id="IPR016193">
    <property type="entry name" value="Cytidine_deaminase-like"/>
</dbReference>
<dbReference type="InterPro" id="IPR011607">
    <property type="entry name" value="MGS-like_dom"/>
</dbReference>
<dbReference type="InterPro" id="IPR036914">
    <property type="entry name" value="MGS-like_dom_sf"/>
</dbReference>
<dbReference type="InterPro" id="IPR002695">
    <property type="entry name" value="PurH-like"/>
</dbReference>
<dbReference type="NCBIfam" id="NF002049">
    <property type="entry name" value="PRK00881.1"/>
    <property type="match status" value="1"/>
</dbReference>
<dbReference type="NCBIfam" id="TIGR00355">
    <property type="entry name" value="purH"/>
    <property type="match status" value="1"/>
</dbReference>
<dbReference type="PANTHER" id="PTHR11692:SF0">
    <property type="entry name" value="BIFUNCTIONAL PURINE BIOSYNTHESIS PROTEIN ATIC"/>
    <property type="match status" value="1"/>
</dbReference>
<dbReference type="PANTHER" id="PTHR11692">
    <property type="entry name" value="BIFUNCTIONAL PURINE BIOSYNTHESIS PROTEIN PURH"/>
    <property type="match status" value="1"/>
</dbReference>
<dbReference type="Pfam" id="PF01808">
    <property type="entry name" value="AICARFT_IMPCHas"/>
    <property type="match status" value="1"/>
</dbReference>
<dbReference type="Pfam" id="PF02142">
    <property type="entry name" value="MGS"/>
    <property type="match status" value="1"/>
</dbReference>
<dbReference type="PIRSF" id="PIRSF000414">
    <property type="entry name" value="AICARFT_IMPCHas"/>
    <property type="match status" value="1"/>
</dbReference>
<dbReference type="SMART" id="SM00798">
    <property type="entry name" value="AICARFT_IMPCHas"/>
    <property type="match status" value="1"/>
</dbReference>
<dbReference type="SMART" id="SM00851">
    <property type="entry name" value="MGS"/>
    <property type="match status" value="1"/>
</dbReference>
<dbReference type="SUPFAM" id="SSF53927">
    <property type="entry name" value="Cytidine deaminase-like"/>
    <property type="match status" value="1"/>
</dbReference>
<dbReference type="SUPFAM" id="SSF52335">
    <property type="entry name" value="Methylglyoxal synthase-like"/>
    <property type="match status" value="1"/>
</dbReference>
<dbReference type="PROSITE" id="PS51855">
    <property type="entry name" value="MGS"/>
    <property type="match status" value="1"/>
</dbReference>
<keyword id="KW-0378">Hydrolase</keyword>
<keyword id="KW-0511">Multifunctional enzyme</keyword>
<keyword id="KW-0658">Purine biosynthesis</keyword>
<keyword id="KW-1185">Reference proteome</keyword>
<keyword id="KW-0808">Transferase</keyword>